<dbReference type="EC" id="3.1.-.-" evidence="1"/>
<dbReference type="EMBL" id="L42023">
    <property type="protein sequence ID" value="AAC21683.1"/>
    <property type="molecule type" value="Genomic_DNA"/>
</dbReference>
<dbReference type="PIR" id="A64140">
    <property type="entry name" value="A64140"/>
</dbReference>
<dbReference type="RefSeq" id="NP_438177.1">
    <property type="nucleotide sequence ID" value="NC_000907.1"/>
</dbReference>
<dbReference type="PDB" id="1XAX">
    <property type="method" value="NMR"/>
    <property type="chains" value="A=1-154"/>
</dbReference>
<dbReference type="PDBsum" id="1XAX"/>
<dbReference type="BMRB" id="P71335"/>
<dbReference type="SMR" id="P71335"/>
<dbReference type="STRING" id="71421.HI_0004"/>
<dbReference type="EnsemblBacteria" id="AAC21683">
    <property type="protein sequence ID" value="AAC21683"/>
    <property type="gene ID" value="HI_0004"/>
</dbReference>
<dbReference type="KEGG" id="hin:HI_0004"/>
<dbReference type="PATRIC" id="fig|71421.8.peg.4"/>
<dbReference type="eggNOG" id="COG0319">
    <property type="taxonomic scope" value="Bacteria"/>
</dbReference>
<dbReference type="HOGENOM" id="CLU_106710_0_1_6"/>
<dbReference type="OrthoDB" id="9807740at2"/>
<dbReference type="PhylomeDB" id="P71335"/>
<dbReference type="BioCyc" id="HINF71421:G1GJ1-4-MONOMER"/>
<dbReference type="EvolutionaryTrace" id="P71335"/>
<dbReference type="Proteomes" id="UP000000579">
    <property type="component" value="Chromosome"/>
</dbReference>
<dbReference type="GO" id="GO:0005737">
    <property type="term" value="C:cytoplasm"/>
    <property type="evidence" value="ECO:0007669"/>
    <property type="project" value="UniProtKB-SubCell"/>
</dbReference>
<dbReference type="GO" id="GO:0004222">
    <property type="term" value="F:metalloendopeptidase activity"/>
    <property type="evidence" value="ECO:0007669"/>
    <property type="project" value="InterPro"/>
</dbReference>
<dbReference type="GO" id="GO:0004521">
    <property type="term" value="F:RNA endonuclease activity"/>
    <property type="evidence" value="ECO:0007669"/>
    <property type="project" value="UniProtKB-UniRule"/>
</dbReference>
<dbReference type="GO" id="GO:0008270">
    <property type="term" value="F:zinc ion binding"/>
    <property type="evidence" value="ECO:0007669"/>
    <property type="project" value="UniProtKB-UniRule"/>
</dbReference>
<dbReference type="GO" id="GO:0006364">
    <property type="term" value="P:rRNA processing"/>
    <property type="evidence" value="ECO:0007669"/>
    <property type="project" value="UniProtKB-UniRule"/>
</dbReference>
<dbReference type="Gene3D" id="3.40.390.30">
    <property type="entry name" value="Metalloproteases ('zincins'), catalytic domain"/>
    <property type="match status" value="1"/>
</dbReference>
<dbReference type="HAMAP" id="MF_00009">
    <property type="entry name" value="Endoribonucl_YbeY"/>
    <property type="match status" value="1"/>
</dbReference>
<dbReference type="InterPro" id="IPR023091">
    <property type="entry name" value="MetalPrtase_cat_dom_sf_prd"/>
</dbReference>
<dbReference type="InterPro" id="IPR002036">
    <property type="entry name" value="YbeY"/>
</dbReference>
<dbReference type="InterPro" id="IPR020549">
    <property type="entry name" value="YbeY_CS"/>
</dbReference>
<dbReference type="NCBIfam" id="TIGR00043">
    <property type="entry name" value="rRNA maturation RNase YbeY"/>
    <property type="match status" value="1"/>
</dbReference>
<dbReference type="PANTHER" id="PTHR46986">
    <property type="entry name" value="ENDORIBONUCLEASE YBEY, CHLOROPLASTIC"/>
    <property type="match status" value="1"/>
</dbReference>
<dbReference type="PANTHER" id="PTHR46986:SF1">
    <property type="entry name" value="ENDORIBONUCLEASE YBEY, CHLOROPLASTIC"/>
    <property type="match status" value="1"/>
</dbReference>
<dbReference type="Pfam" id="PF02130">
    <property type="entry name" value="YbeY"/>
    <property type="match status" value="1"/>
</dbReference>
<dbReference type="SUPFAM" id="SSF55486">
    <property type="entry name" value="Metalloproteases ('zincins'), catalytic domain"/>
    <property type="match status" value="1"/>
</dbReference>
<dbReference type="PROSITE" id="PS01306">
    <property type="entry name" value="UPF0054"/>
    <property type="match status" value="1"/>
</dbReference>
<organism>
    <name type="scientific">Haemophilus influenzae (strain ATCC 51907 / DSM 11121 / KW20 / Rd)</name>
    <dbReference type="NCBI Taxonomy" id="71421"/>
    <lineage>
        <taxon>Bacteria</taxon>
        <taxon>Pseudomonadati</taxon>
        <taxon>Pseudomonadota</taxon>
        <taxon>Gammaproteobacteria</taxon>
        <taxon>Pasteurellales</taxon>
        <taxon>Pasteurellaceae</taxon>
        <taxon>Haemophilus</taxon>
    </lineage>
</organism>
<feature type="chain" id="PRO_0000102463" description="Endoribonuclease YbeY">
    <location>
        <begin position="1"/>
        <end position="154"/>
    </location>
</feature>
<feature type="binding site" evidence="1 2">
    <location>
        <position position="114"/>
    </location>
    <ligand>
        <name>Zn(2+)</name>
        <dbReference type="ChEBI" id="CHEBI:29105"/>
        <note>catalytic</note>
    </ligand>
</feature>
<feature type="binding site" evidence="1 2">
    <location>
        <position position="118"/>
    </location>
    <ligand>
        <name>Zn(2+)</name>
        <dbReference type="ChEBI" id="CHEBI:29105"/>
        <note>catalytic</note>
    </ligand>
</feature>
<feature type="binding site" evidence="1 2">
    <location>
        <position position="124"/>
    </location>
    <ligand>
        <name>Zn(2+)</name>
        <dbReference type="ChEBI" id="CHEBI:29105"/>
        <note>catalytic</note>
    </ligand>
</feature>
<feature type="strand" evidence="3">
    <location>
        <begin position="4"/>
        <end position="10"/>
    </location>
</feature>
<feature type="helix" evidence="3">
    <location>
        <begin position="21"/>
        <end position="32"/>
    </location>
</feature>
<feature type="strand" evidence="3">
    <location>
        <begin position="33"/>
        <end position="35"/>
    </location>
</feature>
<feature type="strand" evidence="3">
    <location>
        <begin position="39"/>
        <end position="45"/>
    </location>
</feature>
<feature type="helix" evidence="3">
    <location>
        <begin position="48"/>
        <end position="58"/>
    </location>
</feature>
<feature type="strand" evidence="3">
    <location>
        <begin position="66"/>
        <end position="70"/>
    </location>
</feature>
<feature type="strand" evidence="3">
    <location>
        <begin position="84"/>
        <end position="88"/>
    </location>
</feature>
<feature type="helix" evidence="3">
    <location>
        <begin position="90"/>
        <end position="100"/>
    </location>
</feature>
<feature type="helix" evidence="3">
    <location>
        <begin position="104"/>
        <end position="117"/>
    </location>
</feature>
<feature type="turn" evidence="3">
    <location>
        <begin position="118"/>
        <end position="120"/>
    </location>
</feature>
<feature type="turn" evidence="3">
    <location>
        <begin position="126"/>
        <end position="128"/>
    </location>
</feature>
<feature type="helix" evidence="3">
    <location>
        <begin position="129"/>
        <end position="141"/>
    </location>
</feature>
<feature type="turn" evidence="3">
    <location>
        <begin position="142"/>
        <end position="145"/>
    </location>
</feature>
<gene>
    <name evidence="1" type="primary">ybeY</name>
    <name type="ordered locus">HI_0004</name>
</gene>
<protein>
    <recommendedName>
        <fullName evidence="1">Endoribonuclease YbeY</fullName>
        <ecNumber evidence="1">3.1.-.-</ecNumber>
    </recommendedName>
</protein>
<reference key="1">
    <citation type="journal article" date="1995" name="Science">
        <title>Whole-genome random sequencing and assembly of Haemophilus influenzae Rd.</title>
        <authorList>
            <person name="Fleischmann R.D."/>
            <person name="Adams M.D."/>
            <person name="White O."/>
            <person name="Clayton R.A."/>
            <person name="Kirkness E.F."/>
            <person name="Kerlavage A.R."/>
            <person name="Bult C.J."/>
            <person name="Tomb J.-F."/>
            <person name="Dougherty B.A."/>
            <person name="Merrick J.M."/>
            <person name="McKenney K."/>
            <person name="Sutton G.G."/>
            <person name="FitzHugh W."/>
            <person name="Fields C.A."/>
            <person name="Gocayne J.D."/>
            <person name="Scott J.D."/>
            <person name="Shirley R."/>
            <person name="Liu L.-I."/>
            <person name="Glodek A."/>
            <person name="Kelley J.M."/>
            <person name="Weidman J.F."/>
            <person name="Phillips C.A."/>
            <person name="Spriggs T."/>
            <person name="Hedblom E."/>
            <person name="Cotton M.D."/>
            <person name="Utterback T.R."/>
            <person name="Hanna M.C."/>
            <person name="Nguyen D.T."/>
            <person name="Saudek D.M."/>
            <person name="Brandon R.C."/>
            <person name="Fine L.D."/>
            <person name="Fritchman J.L."/>
            <person name="Fuhrmann J.L."/>
            <person name="Geoghagen N.S.M."/>
            <person name="Gnehm C.L."/>
            <person name="McDonald L.A."/>
            <person name="Small K.V."/>
            <person name="Fraser C.M."/>
            <person name="Smith H.O."/>
            <person name="Venter J.C."/>
        </authorList>
    </citation>
    <scope>NUCLEOTIDE SEQUENCE [LARGE SCALE GENOMIC DNA]</scope>
    <source>
        <strain>ATCC 51907 / DSM 11121 / KW20 / Rd</strain>
    </source>
</reference>
<reference key="2">
    <citation type="journal article" date="2005" name="Protein Sci.">
        <title>NMR structure of HI0004, a putative essential gene product from Haemophilus influenzae, and comparison with the X-ray structure of an Aquifex aeolicus homolog.</title>
        <authorList>
            <person name="Yeh D.C."/>
            <person name="Parsons L.M."/>
            <person name="Parsons J.F."/>
            <person name="Liu F."/>
            <person name="Eisenstein E."/>
            <person name="Orban J."/>
        </authorList>
    </citation>
    <scope>STRUCTURE BY NMR</scope>
    <scope>COFACTOR</scope>
    <scope>ZINC BINDING</scope>
</reference>
<sequence>MGSVLVDLQIATENIEGLPTEEQIVQWATGAVQPEGNEVEMTVRIVDEAESHELNLTYRGKDRPTNVLSFPFECPDEVELPLLGDLVICRQVVEREASEQEKPLMAHWAHMVVHGSLHLLGYDHIEDDEAEEMESLETQIMQGLGFDDPYLAEK</sequence>
<proteinExistence type="evidence at protein level"/>
<evidence type="ECO:0000255" key="1">
    <source>
        <dbReference type="HAMAP-Rule" id="MF_00009"/>
    </source>
</evidence>
<evidence type="ECO:0000269" key="2">
    <source>
    </source>
</evidence>
<evidence type="ECO:0007829" key="3">
    <source>
        <dbReference type="PDB" id="1XAX"/>
    </source>
</evidence>
<keyword id="KW-0002">3D-structure</keyword>
<keyword id="KW-0963">Cytoplasm</keyword>
<keyword id="KW-0255">Endonuclease</keyword>
<keyword id="KW-0378">Hydrolase</keyword>
<keyword id="KW-0479">Metal-binding</keyword>
<keyword id="KW-0540">Nuclease</keyword>
<keyword id="KW-1185">Reference proteome</keyword>
<keyword id="KW-0690">Ribosome biogenesis</keyword>
<keyword id="KW-0698">rRNA processing</keyword>
<keyword id="KW-0862">Zinc</keyword>
<name>YBEY_HAEIN</name>
<comment type="function">
    <text evidence="1">Single strand-specific metallo-endoribonuclease involved in late-stage 70S ribosome quality control and in maturation of the 3' terminus of the 16S rRNA.</text>
</comment>
<comment type="cofactor">
    <cofactor evidence="1 2">
        <name>Zn(2+)</name>
        <dbReference type="ChEBI" id="CHEBI:29105"/>
    </cofactor>
    <text evidence="1 2">Binds 1 zinc ion.</text>
</comment>
<comment type="subcellular location">
    <subcellularLocation>
        <location evidence="1">Cytoplasm</location>
    </subcellularLocation>
</comment>
<comment type="similarity">
    <text evidence="1">Belongs to the endoribonuclease YbeY family.</text>
</comment>
<accession>P71335</accession>